<evidence type="ECO:0000255" key="1">
    <source>
        <dbReference type="HAMAP-Rule" id="MF_00115"/>
    </source>
</evidence>
<name>MSCL_DESHY</name>
<reference key="1">
    <citation type="journal article" date="2006" name="J. Bacteriol.">
        <title>Complete genome sequence of the dehalorespiring bacterium Desulfitobacterium hafniense Y51 and comparison with Dehalococcoides ethenogenes 195.</title>
        <authorList>
            <person name="Nonaka H."/>
            <person name="Keresztes G."/>
            <person name="Shinoda Y."/>
            <person name="Ikenaga Y."/>
            <person name="Abe M."/>
            <person name="Naito K."/>
            <person name="Inatomi K."/>
            <person name="Furukawa K."/>
            <person name="Inui M."/>
            <person name="Yukawa H."/>
        </authorList>
    </citation>
    <scope>NUCLEOTIDE SEQUENCE [LARGE SCALE GENOMIC DNA]</scope>
    <source>
        <strain>Y51</strain>
    </source>
</reference>
<protein>
    <recommendedName>
        <fullName evidence="1">Large-conductance mechanosensitive channel</fullName>
    </recommendedName>
</protein>
<organism>
    <name type="scientific">Desulfitobacterium hafniense (strain Y51)</name>
    <dbReference type="NCBI Taxonomy" id="138119"/>
    <lineage>
        <taxon>Bacteria</taxon>
        <taxon>Bacillati</taxon>
        <taxon>Bacillota</taxon>
        <taxon>Clostridia</taxon>
        <taxon>Eubacteriales</taxon>
        <taxon>Desulfitobacteriaceae</taxon>
        <taxon>Desulfitobacterium</taxon>
    </lineage>
</organism>
<accession>Q24Y14</accession>
<comment type="function">
    <text evidence="1">Channel that opens in response to stretch forces in the membrane lipid bilayer. May participate in the regulation of osmotic pressure changes within the cell.</text>
</comment>
<comment type="subunit">
    <text evidence="1">Homopentamer.</text>
</comment>
<comment type="subcellular location">
    <subcellularLocation>
        <location evidence="1">Cell membrane</location>
        <topology evidence="1">Multi-pass membrane protein</topology>
    </subcellularLocation>
</comment>
<comment type="similarity">
    <text evidence="1">Belongs to the MscL family.</text>
</comment>
<sequence length="150" mass="16616">MWKEFKEFAMKGNVIDLAVGVIIGGAFGKIVTSLVNDVIMPLVGLLLGQMDFSNAFITLGKGDFATIAEAQAAKVPTLNYGLFINNVVDFLIIAFTIFIVIKQINRFNRKKEVKEEVAEEKATKPCPYCYVEIHKEATRCPHCTSVLESP</sequence>
<dbReference type="EMBL" id="AP008230">
    <property type="protein sequence ID" value="BAE83078.1"/>
    <property type="molecule type" value="Genomic_DNA"/>
</dbReference>
<dbReference type="RefSeq" id="WP_005814614.1">
    <property type="nucleotide sequence ID" value="NC_007907.1"/>
</dbReference>
<dbReference type="SMR" id="Q24Y14"/>
<dbReference type="STRING" id="138119.DSY1289"/>
<dbReference type="KEGG" id="dsy:DSY1289"/>
<dbReference type="eggNOG" id="COG1970">
    <property type="taxonomic scope" value="Bacteria"/>
</dbReference>
<dbReference type="HOGENOM" id="CLU_095787_2_3_9"/>
<dbReference type="Proteomes" id="UP000001946">
    <property type="component" value="Chromosome"/>
</dbReference>
<dbReference type="GO" id="GO:0005886">
    <property type="term" value="C:plasma membrane"/>
    <property type="evidence" value="ECO:0007669"/>
    <property type="project" value="UniProtKB-SubCell"/>
</dbReference>
<dbReference type="GO" id="GO:0008381">
    <property type="term" value="F:mechanosensitive monoatomic ion channel activity"/>
    <property type="evidence" value="ECO:0007669"/>
    <property type="project" value="UniProtKB-UniRule"/>
</dbReference>
<dbReference type="Gene3D" id="1.10.1200.120">
    <property type="entry name" value="Large-conductance mechanosensitive channel, MscL, domain 1"/>
    <property type="match status" value="1"/>
</dbReference>
<dbReference type="HAMAP" id="MF_00115">
    <property type="entry name" value="MscL"/>
    <property type="match status" value="1"/>
</dbReference>
<dbReference type="InterPro" id="IPR019823">
    <property type="entry name" value="Mechanosensitive_channel_CS"/>
</dbReference>
<dbReference type="InterPro" id="IPR001185">
    <property type="entry name" value="MS_channel"/>
</dbReference>
<dbReference type="InterPro" id="IPR037673">
    <property type="entry name" value="MSC/AndL"/>
</dbReference>
<dbReference type="InterPro" id="IPR036019">
    <property type="entry name" value="MscL_channel"/>
</dbReference>
<dbReference type="NCBIfam" id="TIGR00220">
    <property type="entry name" value="mscL"/>
    <property type="match status" value="1"/>
</dbReference>
<dbReference type="NCBIfam" id="NF001843">
    <property type="entry name" value="PRK00567.1-4"/>
    <property type="match status" value="1"/>
</dbReference>
<dbReference type="NCBIfam" id="NF010557">
    <property type="entry name" value="PRK13952.1"/>
    <property type="match status" value="1"/>
</dbReference>
<dbReference type="PANTHER" id="PTHR30266:SF2">
    <property type="entry name" value="LARGE-CONDUCTANCE MECHANOSENSITIVE CHANNEL"/>
    <property type="match status" value="1"/>
</dbReference>
<dbReference type="PANTHER" id="PTHR30266">
    <property type="entry name" value="MECHANOSENSITIVE CHANNEL MSCL"/>
    <property type="match status" value="1"/>
</dbReference>
<dbReference type="Pfam" id="PF01741">
    <property type="entry name" value="MscL"/>
    <property type="match status" value="1"/>
</dbReference>
<dbReference type="PRINTS" id="PR01264">
    <property type="entry name" value="MECHCHANNEL"/>
</dbReference>
<dbReference type="SUPFAM" id="SSF81330">
    <property type="entry name" value="Gated mechanosensitive channel"/>
    <property type="match status" value="1"/>
</dbReference>
<dbReference type="PROSITE" id="PS01327">
    <property type="entry name" value="MSCL"/>
    <property type="match status" value="1"/>
</dbReference>
<feature type="chain" id="PRO_1000015375" description="Large-conductance mechanosensitive channel">
    <location>
        <begin position="1"/>
        <end position="150"/>
    </location>
</feature>
<feature type="transmembrane region" description="Helical" evidence="1">
    <location>
        <begin position="14"/>
        <end position="34"/>
    </location>
</feature>
<feature type="transmembrane region" description="Helical" evidence="1">
    <location>
        <begin position="81"/>
        <end position="101"/>
    </location>
</feature>
<gene>
    <name evidence="1" type="primary">mscL</name>
    <name type="ordered locus">DSY1289</name>
</gene>
<proteinExistence type="inferred from homology"/>
<keyword id="KW-1003">Cell membrane</keyword>
<keyword id="KW-0407">Ion channel</keyword>
<keyword id="KW-0406">Ion transport</keyword>
<keyword id="KW-0472">Membrane</keyword>
<keyword id="KW-1185">Reference proteome</keyword>
<keyword id="KW-0812">Transmembrane</keyword>
<keyword id="KW-1133">Transmembrane helix</keyword>
<keyword id="KW-0813">Transport</keyword>